<accession>P69125</accession>
<accession>P17705</accession>
<name>H32_TETRO</name>
<feature type="initiator methionine" description="Removed" evidence="1">
    <location>
        <position position="1"/>
    </location>
</feature>
<feature type="chain" id="PRO_0000221348" description="Histone H3.2">
    <location>
        <begin position="2"/>
        <end position="41" status="greater than"/>
    </location>
</feature>
<feature type="region of interest" description="Disordered" evidence="2">
    <location>
        <begin position="1"/>
        <end position="41"/>
    </location>
</feature>
<feature type="non-terminal residue">
    <location>
        <position position="41"/>
    </location>
</feature>
<evidence type="ECO:0000250" key="1"/>
<evidence type="ECO:0000256" key="2">
    <source>
        <dbReference type="SAM" id="MobiDB-lite"/>
    </source>
</evidence>
<evidence type="ECO:0000305" key="3"/>
<keyword id="KW-0158">Chromosome</keyword>
<keyword id="KW-0238">DNA-binding</keyword>
<keyword id="KW-0544">Nucleosome core</keyword>
<keyword id="KW-0539">Nucleus</keyword>
<organism>
    <name type="scientific">Tetrahymena rostrata</name>
    <dbReference type="NCBI Taxonomy" id="5909"/>
    <lineage>
        <taxon>Eukaryota</taxon>
        <taxon>Sar</taxon>
        <taxon>Alveolata</taxon>
        <taxon>Ciliophora</taxon>
        <taxon>Intramacronucleata</taxon>
        <taxon>Oligohymenophorea</taxon>
        <taxon>Hymenostomatida</taxon>
        <taxon>Tetrahymenina</taxon>
        <taxon>Tetrahymenidae</taxon>
        <taxon>Tetrahymena</taxon>
    </lineage>
</organism>
<sequence length="41" mass="4343">MARTKQTARKSTGAKAPRKQLASKAARKSAPATGGIKKPHR</sequence>
<dbReference type="EMBL" id="X17144">
    <property type="protein sequence ID" value="CAA35022.1"/>
    <property type="molecule type" value="Genomic_DNA"/>
</dbReference>
<dbReference type="GO" id="GO:0000786">
    <property type="term" value="C:nucleosome"/>
    <property type="evidence" value="ECO:0007669"/>
    <property type="project" value="UniProtKB-KW"/>
</dbReference>
<dbReference type="GO" id="GO:0005634">
    <property type="term" value="C:nucleus"/>
    <property type="evidence" value="ECO:0007669"/>
    <property type="project" value="UniProtKB-SubCell"/>
</dbReference>
<dbReference type="GO" id="GO:0003677">
    <property type="term" value="F:DNA binding"/>
    <property type="evidence" value="ECO:0007669"/>
    <property type="project" value="UniProtKB-KW"/>
</dbReference>
<dbReference type="GO" id="GO:0046982">
    <property type="term" value="F:protein heterodimerization activity"/>
    <property type="evidence" value="ECO:0007669"/>
    <property type="project" value="InterPro"/>
</dbReference>
<dbReference type="GO" id="GO:0030527">
    <property type="term" value="F:structural constituent of chromatin"/>
    <property type="evidence" value="ECO:0007669"/>
    <property type="project" value="InterPro"/>
</dbReference>
<dbReference type="Gene3D" id="1.10.20.10">
    <property type="entry name" value="Histone, subunit A"/>
    <property type="match status" value="1"/>
</dbReference>
<dbReference type="InterPro" id="IPR009072">
    <property type="entry name" value="Histone-fold"/>
</dbReference>
<dbReference type="InterPro" id="IPR000164">
    <property type="entry name" value="Histone_H3/CENP-A"/>
</dbReference>
<dbReference type="PANTHER" id="PTHR11426">
    <property type="entry name" value="HISTONE H3"/>
    <property type="match status" value="1"/>
</dbReference>
<dbReference type="PRINTS" id="PR00622">
    <property type="entry name" value="HISTONEH3"/>
</dbReference>
<dbReference type="SUPFAM" id="SSF47113">
    <property type="entry name" value="Histone-fold"/>
    <property type="match status" value="1"/>
</dbReference>
<dbReference type="PROSITE" id="PS00322">
    <property type="entry name" value="HISTONE_H3_1"/>
    <property type="match status" value="1"/>
</dbReference>
<proteinExistence type="inferred from homology"/>
<protein>
    <recommendedName>
        <fullName>Histone H3.2</fullName>
    </recommendedName>
</protein>
<comment type="function">
    <text>Core component of nucleosome. Nucleosomes wrap and compact DNA into chromatin, limiting DNA accessibility to the cellular machineries which require DNA as a template. Histones thereby play a central role in transcription regulation, DNA repair, DNA replication and chromosomal stability. DNA accessibility is regulated via a complex set of post-translational modifications of histones, also called histone code, and nucleosome remodeling.</text>
</comment>
<comment type="subunit">
    <text>The nucleosome is a histone octamer containing two molecules each of H2A, H2B, H3 and H4 assembled in one H3-H4 heterotetramer and two H2A-H2B heterodimers. The octamer wraps approximately 147 bp of DNA.</text>
</comment>
<comment type="subcellular location">
    <subcellularLocation>
        <location evidence="1">Nucleus</location>
    </subcellularLocation>
    <subcellularLocation>
        <location evidence="1">Chromosome</location>
    </subcellularLocation>
</comment>
<comment type="similarity">
    <text evidence="3">Belongs to the histone H3 family.</text>
</comment>
<reference key="1">
    <citation type="journal article" date="1990" name="Nucleic Acids Res.">
        <title>Characterization of the promoter region of Tetrahymena genes.</title>
        <authorList>
            <person name="Brunk C.F."/>
            <person name="Sadler L.A."/>
        </authorList>
    </citation>
    <scope>NUCLEOTIDE SEQUENCE [GENOMIC DNA]</scope>
</reference>
<reference key="2">
    <citation type="journal article" date="1990" name="J. Mol. Evol.">
        <title>Phylogenetic relationships among Tetrahymena species determined using the polymerase chain reaction.</title>
        <authorList>
            <person name="Brunk C.F."/>
            <person name="Kahn R.W."/>
            <person name="Sadler L.A."/>
        </authorList>
    </citation>
    <scope>NUCLEOTIDE SEQUENCE [GENOMIC DNA]</scope>
</reference>